<name>AMGO2_PONAB</name>
<accession>Q5R7M3</accession>
<evidence type="ECO:0000250" key="1"/>
<evidence type="ECO:0000250" key="2">
    <source>
        <dbReference type="UniProtKB" id="Q7TNJ4"/>
    </source>
</evidence>
<evidence type="ECO:0000255" key="3"/>
<evidence type="ECO:0000255" key="4">
    <source>
        <dbReference type="PROSITE-ProRule" id="PRU00114"/>
    </source>
</evidence>
<evidence type="ECO:0000256" key="5">
    <source>
        <dbReference type="SAM" id="MobiDB-lite"/>
    </source>
</evidence>
<evidence type="ECO:0000305" key="6"/>
<evidence type="ECO:0000312" key="7">
    <source>
        <dbReference type="EMBL" id="CAH92237.1"/>
    </source>
</evidence>
<dbReference type="EMBL" id="CR860091">
    <property type="protein sequence ID" value="CAH92237.1"/>
    <property type="molecule type" value="mRNA"/>
</dbReference>
<dbReference type="SMR" id="Q5R7M3"/>
<dbReference type="STRING" id="9601.ENSPPYP00000005068"/>
<dbReference type="GlyCosmos" id="Q5R7M3">
    <property type="glycosylation" value="7 sites, No reported glycans"/>
</dbReference>
<dbReference type="eggNOG" id="ENOG502R009">
    <property type="taxonomic scope" value="Eukaryota"/>
</dbReference>
<dbReference type="InParanoid" id="Q5R7M3"/>
<dbReference type="Proteomes" id="UP000001595">
    <property type="component" value="Unplaced"/>
</dbReference>
<dbReference type="GO" id="GO:0005634">
    <property type="term" value="C:nucleus"/>
    <property type="evidence" value="ECO:0007669"/>
    <property type="project" value="UniProtKB-SubCell"/>
</dbReference>
<dbReference type="GO" id="GO:0005886">
    <property type="term" value="C:plasma membrane"/>
    <property type="evidence" value="ECO:0007669"/>
    <property type="project" value="UniProtKB-SubCell"/>
</dbReference>
<dbReference type="GO" id="GO:0007420">
    <property type="term" value="P:brain development"/>
    <property type="evidence" value="ECO:0007669"/>
    <property type="project" value="TreeGrafter"/>
</dbReference>
<dbReference type="GO" id="GO:0007157">
    <property type="term" value="P:heterophilic cell-cell adhesion via plasma membrane cell adhesion molecules"/>
    <property type="evidence" value="ECO:0000250"/>
    <property type="project" value="UniProtKB"/>
</dbReference>
<dbReference type="GO" id="GO:0007156">
    <property type="term" value="P:homophilic cell adhesion via plasma membrane adhesion molecules"/>
    <property type="evidence" value="ECO:0000250"/>
    <property type="project" value="UniProtKB"/>
</dbReference>
<dbReference type="GO" id="GO:0043069">
    <property type="term" value="P:negative regulation of programmed cell death"/>
    <property type="evidence" value="ECO:0000250"/>
    <property type="project" value="UniProtKB"/>
</dbReference>
<dbReference type="FunFam" id="2.60.40.10:FF:001047">
    <property type="entry name" value="amphoterin-induced protein 2 isoform X1"/>
    <property type="match status" value="1"/>
</dbReference>
<dbReference type="FunFam" id="3.80.10.10:FF:000170">
    <property type="entry name" value="amphoterin-induced protein 2 isoform X1"/>
    <property type="match status" value="1"/>
</dbReference>
<dbReference type="Gene3D" id="2.60.40.10">
    <property type="entry name" value="Immunoglobulins"/>
    <property type="match status" value="1"/>
</dbReference>
<dbReference type="Gene3D" id="3.80.10.10">
    <property type="entry name" value="Ribonuclease Inhibitor"/>
    <property type="match status" value="1"/>
</dbReference>
<dbReference type="InterPro" id="IPR031283">
    <property type="entry name" value="AMIGO"/>
</dbReference>
<dbReference type="InterPro" id="IPR000483">
    <property type="entry name" value="Cys-rich_flank_reg_C"/>
</dbReference>
<dbReference type="InterPro" id="IPR007110">
    <property type="entry name" value="Ig-like_dom"/>
</dbReference>
<dbReference type="InterPro" id="IPR036179">
    <property type="entry name" value="Ig-like_dom_sf"/>
</dbReference>
<dbReference type="InterPro" id="IPR013783">
    <property type="entry name" value="Ig-like_fold"/>
</dbReference>
<dbReference type="InterPro" id="IPR003599">
    <property type="entry name" value="Ig_sub"/>
</dbReference>
<dbReference type="InterPro" id="IPR013151">
    <property type="entry name" value="Immunoglobulin_dom"/>
</dbReference>
<dbReference type="InterPro" id="IPR001611">
    <property type="entry name" value="Leu-rich_rpt"/>
</dbReference>
<dbReference type="InterPro" id="IPR003591">
    <property type="entry name" value="Leu-rich_rpt_typical-subtyp"/>
</dbReference>
<dbReference type="InterPro" id="IPR032675">
    <property type="entry name" value="LRR_dom_sf"/>
</dbReference>
<dbReference type="PANTHER" id="PTHR24368">
    <property type="entry name" value="AMPHOTERIN-INDUCED PROTEIN"/>
    <property type="match status" value="1"/>
</dbReference>
<dbReference type="PANTHER" id="PTHR24368:SF209">
    <property type="entry name" value="AMPHOTERIN-INDUCED PROTEIN 2"/>
    <property type="match status" value="1"/>
</dbReference>
<dbReference type="Pfam" id="PF00047">
    <property type="entry name" value="ig"/>
    <property type="match status" value="1"/>
</dbReference>
<dbReference type="Pfam" id="PF13855">
    <property type="entry name" value="LRR_8"/>
    <property type="match status" value="1"/>
</dbReference>
<dbReference type="SMART" id="SM00409">
    <property type="entry name" value="IG"/>
    <property type="match status" value="1"/>
</dbReference>
<dbReference type="SMART" id="SM00369">
    <property type="entry name" value="LRR_TYP"/>
    <property type="match status" value="5"/>
</dbReference>
<dbReference type="SMART" id="SM00082">
    <property type="entry name" value="LRRCT"/>
    <property type="match status" value="1"/>
</dbReference>
<dbReference type="SUPFAM" id="SSF48726">
    <property type="entry name" value="Immunoglobulin"/>
    <property type="match status" value="1"/>
</dbReference>
<dbReference type="SUPFAM" id="SSF52058">
    <property type="entry name" value="L domain-like"/>
    <property type="match status" value="1"/>
</dbReference>
<dbReference type="PROSITE" id="PS50835">
    <property type="entry name" value="IG_LIKE"/>
    <property type="match status" value="1"/>
</dbReference>
<dbReference type="PROSITE" id="PS51450">
    <property type="entry name" value="LRR"/>
    <property type="match status" value="6"/>
</dbReference>
<sequence>MSLRVHTLPTLLGAVVRPGCRELLCLLMITVAVGPGASGVCPTACICATDIVSCTNKHLSKVPGNLFRLMKRLDLSYNRIGLLDSEWIPVSFAKLNTLILRHNNITSISTGSFSTTPNLKCLDLSSNKLKTVKNAVFQELKVLEVLLLYNNHISYLDPSAFGGLSQLQKLYLSGNFLTQFPMDLYVGRFKLAELMFLDVSYNRIPSMPMHHINLVPGKQLRGIYLHGNPFVCDCSLYSLLVFWYRRHFSSVMDFKNDYTCRLWSDSRHSRQVLLLQDSFMNCSDSIINGSFRALGFIHEAQVGERLMVHCDSKTGNANTDFIWVGPDNRLLEPDKEMENFYVFHNGSLVIESPRFEDAGVYSCIAMNKQRLLNETVDVTINVSNVTVSRSHAHEAFNTAFTTLAACVASIVLVLLYLYLTPCPCKCKTKRQKNMLHQSNAHSSILSPGPASDASADERKAGAGKRVVFLEPLKDTAAGQNGKVRLFPSEAVIAEGILKSTRGKSDSDSVNSVFSDTPFVAST</sequence>
<feature type="signal peptide" evidence="3">
    <location>
        <begin position="1"/>
        <end position="39"/>
    </location>
</feature>
<feature type="chain" id="PRO_0000014511" description="Amphoterin-induced protein 2" evidence="3">
    <location>
        <begin position="40"/>
        <end position="522"/>
    </location>
</feature>
<feature type="topological domain" description="Extracellular" evidence="3">
    <location>
        <begin position="40"/>
        <end position="398"/>
    </location>
</feature>
<feature type="transmembrane region" description="Helical" evidence="3">
    <location>
        <begin position="399"/>
        <end position="419"/>
    </location>
</feature>
<feature type="topological domain" description="Cytoplasmic" evidence="3">
    <location>
        <begin position="420"/>
        <end position="522"/>
    </location>
</feature>
<feature type="domain" description="LRRNT">
    <location>
        <begin position="40"/>
        <end position="68"/>
    </location>
</feature>
<feature type="repeat" description="LRR 1">
    <location>
        <begin position="69"/>
        <end position="90"/>
    </location>
</feature>
<feature type="repeat" description="LRR 2">
    <location>
        <begin position="94"/>
        <end position="115"/>
    </location>
</feature>
<feature type="repeat" description="LRR 3">
    <location>
        <begin position="118"/>
        <end position="139"/>
    </location>
</feature>
<feature type="repeat" description="LRR 4">
    <location>
        <begin position="142"/>
        <end position="163"/>
    </location>
</feature>
<feature type="repeat" description="LRR 5">
    <location>
        <begin position="166"/>
        <end position="187"/>
    </location>
</feature>
<feature type="repeat" description="LRR 6">
    <location>
        <begin position="193"/>
        <end position="214"/>
    </location>
</feature>
<feature type="domain" description="LRRCT">
    <location>
        <begin position="228"/>
        <end position="284"/>
    </location>
</feature>
<feature type="domain" description="Ig-like C2-type" evidence="3">
    <location>
        <begin position="289"/>
        <end position="379"/>
    </location>
</feature>
<feature type="region of interest" description="Disordered" evidence="5">
    <location>
        <begin position="501"/>
        <end position="522"/>
    </location>
</feature>
<feature type="glycosylation site" description="N-linked (GlcNAc...) asparagine" evidence="3">
    <location>
        <position position="104"/>
    </location>
</feature>
<feature type="glycosylation site" description="N-linked (GlcNAc...) asparagine" evidence="3">
    <location>
        <position position="281"/>
    </location>
</feature>
<feature type="glycosylation site" description="N-linked (GlcNAc...) asparagine" evidence="3">
    <location>
        <position position="288"/>
    </location>
</feature>
<feature type="glycosylation site" description="N-linked (GlcNAc...) asparagine" evidence="3">
    <location>
        <position position="345"/>
    </location>
</feature>
<feature type="glycosylation site" description="N-linked (GlcNAc...) asparagine" evidence="3">
    <location>
        <position position="373"/>
    </location>
</feature>
<feature type="glycosylation site" description="N-linked (GlcNAc...) asparagine" evidence="3">
    <location>
        <position position="381"/>
    </location>
</feature>
<feature type="glycosylation site" description="N-linked (GlcNAc...) asparagine" evidence="3">
    <location>
        <position position="384"/>
    </location>
</feature>
<feature type="disulfide bond" evidence="4">
    <location>
        <begin position="41"/>
        <end position="47"/>
    </location>
</feature>
<feature type="disulfide bond" evidence="4">
    <location>
        <begin position="45"/>
        <end position="54"/>
    </location>
</feature>
<feature type="disulfide bond" evidence="4">
    <location>
        <begin position="232"/>
        <end position="260"/>
    </location>
</feature>
<feature type="disulfide bond" evidence="4">
    <location>
        <begin position="234"/>
        <end position="282"/>
    </location>
</feature>
<feature type="disulfide bond" evidence="4">
    <location>
        <begin position="310"/>
        <end position="363"/>
    </location>
</feature>
<comment type="function">
    <text evidence="1">Required for depolarization-dependent survival of cultured cerebellar granule neurons. May mediate homophilic as well as heterophilic cell-cell interaction with AMIGO1 or AMIGO3. May contribute to signal transduction through its intracellular domain (By similarity).</text>
</comment>
<comment type="subunit">
    <text evidence="1">Binds itself as well as AMIGO1 and AMIGO3.</text>
</comment>
<comment type="subcellular location">
    <subcellularLocation>
        <location evidence="1">Cell membrane</location>
        <topology evidence="1">Single-pass type I membrane protein</topology>
    </subcellularLocation>
    <subcellularLocation>
        <location evidence="1">Nucleus</location>
    </subcellularLocation>
    <text evidence="1">Associated with nucleus as well as plasma membrane. Restricted to somata of cerebellar as well as hippocampal neurons (By similarity).</text>
</comment>
<comment type="similarity">
    <text evidence="6">Belongs to the immunoglobulin superfamily. AMIGO family.</text>
</comment>
<gene>
    <name evidence="2" type="primary">AMIGO2</name>
</gene>
<protein>
    <recommendedName>
        <fullName>Amphoterin-induced protein 2</fullName>
    </recommendedName>
    <alternativeName>
        <fullName>AMIGO-2</fullName>
    </alternativeName>
</protein>
<keyword id="KW-0130">Cell adhesion</keyword>
<keyword id="KW-1003">Cell membrane</keyword>
<keyword id="KW-1015">Disulfide bond</keyword>
<keyword id="KW-0325">Glycoprotein</keyword>
<keyword id="KW-0393">Immunoglobulin domain</keyword>
<keyword id="KW-0433">Leucine-rich repeat</keyword>
<keyword id="KW-0472">Membrane</keyword>
<keyword id="KW-0539">Nucleus</keyword>
<keyword id="KW-1185">Reference proteome</keyword>
<keyword id="KW-0677">Repeat</keyword>
<keyword id="KW-0732">Signal</keyword>
<keyword id="KW-0812">Transmembrane</keyword>
<keyword id="KW-1133">Transmembrane helix</keyword>
<proteinExistence type="evidence at transcript level"/>
<reference evidence="7" key="1">
    <citation type="submission" date="2004-11" db="EMBL/GenBank/DDBJ databases">
        <authorList>
            <consortium name="The German cDNA consortium"/>
        </authorList>
    </citation>
    <scope>NUCLEOTIDE SEQUENCE [LARGE SCALE MRNA]</scope>
    <source>
        <tissue evidence="7">Kidney</tissue>
    </source>
</reference>
<organism>
    <name type="scientific">Pongo abelii</name>
    <name type="common">Sumatran orangutan</name>
    <name type="synonym">Pongo pygmaeus abelii</name>
    <dbReference type="NCBI Taxonomy" id="9601"/>
    <lineage>
        <taxon>Eukaryota</taxon>
        <taxon>Metazoa</taxon>
        <taxon>Chordata</taxon>
        <taxon>Craniata</taxon>
        <taxon>Vertebrata</taxon>
        <taxon>Euteleostomi</taxon>
        <taxon>Mammalia</taxon>
        <taxon>Eutheria</taxon>
        <taxon>Euarchontoglires</taxon>
        <taxon>Primates</taxon>
        <taxon>Haplorrhini</taxon>
        <taxon>Catarrhini</taxon>
        <taxon>Hominidae</taxon>
        <taxon>Pongo</taxon>
    </lineage>
</organism>